<name>RL20_SYMTH</name>
<keyword id="KW-1185">Reference proteome</keyword>
<keyword id="KW-0687">Ribonucleoprotein</keyword>
<keyword id="KW-0689">Ribosomal protein</keyword>
<keyword id="KW-0694">RNA-binding</keyword>
<keyword id="KW-0699">rRNA-binding</keyword>
<evidence type="ECO:0000255" key="1">
    <source>
        <dbReference type="HAMAP-Rule" id="MF_00382"/>
    </source>
</evidence>
<evidence type="ECO:0000305" key="2"/>
<reference key="1">
    <citation type="journal article" date="2004" name="Nucleic Acids Res.">
        <title>Genome sequence of Symbiobacterium thermophilum, an uncultivable bacterium that depends on microbial commensalism.</title>
        <authorList>
            <person name="Ueda K."/>
            <person name="Yamashita A."/>
            <person name="Ishikawa J."/>
            <person name="Shimada M."/>
            <person name="Watsuji T."/>
            <person name="Morimura K."/>
            <person name="Ikeda H."/>
            <person name="Hattori M."/>
            <person name="Beppu T."/>
        </authorList>
    </citation>
    <scope>NUCLEOTIDE SEQUENCE [LARGE SCALE GENOMIC DNA]</scope>
    <source>
        <strain>DSM 24528 / JCM 14929 / IAM 14863 / T</strain>
    </source>
</reference>
<comment type="function">
    <text evidence="1">Binds directly to 23S ribosomal RNA and is necessary for the in vitro assembly process of the 50S ribosomal subunit. It is not involved in the protein synthesizing functions of that subunit.</text>
</comment>
<comment type="similarity">
    <text evidence="1">Belongs to the bacterial ribosomal protein bL20 family.</text>
</comment>
<gene>
    <name evidence="1" type="primary">rplT</name>
    <name type="ordered locus">STH1093</name>
</gene>
<organism>
    <name type="scientific">Symbiobacterium thermophilum (strain DSM 24528 / JCM 14929 / IAM 14863 / T)</name>
    <dbReference type="NCBI Taxonomy" id="292459"/>
    <lineage>
        <taxon>Bacteria</taxon>
        <taxon>Bacillati</taxon>
        <taxon>Bacillota</taxon>
        <taxon>Clostridia</taxon>
        <taxon>Eubacteriales</taxon>
        <taxon>Symbiobacteriaceae</taxon>
        <taxon>Symbiobacterium</taxon>
    </lineage>
</organism>
<sequence>MARTKPGKTTRARHKKILKLAKGYYGARSKHFRPANETVMKALFYARRDRRQRKRNFRRLWIARINAAARMNGLTYSQFINGLNKAGVQLNRKVLADIAVNDAAGFSALVEKAKASL</sequence>
<dbReference type="EMBL" id="AP006840">
    <property type="protein sequence ID" value="BAD40078.1"/>
    <property type="molecule type" value="Genomic_DNA"/>
</dbReference>
<dbReference type="RefSeq" id="WP_011195225.1">
    <property type="nucleotide sequence ID" value="NC_006177.1"/>
</dbReference>
<dbReference type="SMR" id="Q67QG5"/>
<dbReference type="STRING" id="292459.STH1093"/>
<dbReference type="KEGG" id="sth:STH1093"/>
<dbReference type="eggNOG" id="COG0292">
    <property type="taxonomic scope" value="Bacteria"/>
</dbReference>
<dbReference type="HOGENOM" id="CLU_123265_0_1_9"/>
<dbReference type="OrthoDB" id="9808966at2"/>
<dbReference type="Proteomes" id="UP000000417">
    <property type="component" value="Chromosome"/>
</dbReference>
<dbReference type="GO" id="GO:1990904">
    <property type="term" value="C:ribonucleoprotein complex"/>
    <property type="evidence" value="ECO:0007669"/>
    <property type="project" value="UniProtKB-KW"/>
</dbReference>
<dbReference type="GO" id="GO:0005840">
    <property type="term" value="C:ribosome"/>
    <property type="evidence" value="ECO:0007669"/>
    <property type="project" value="UniProtKB-KW"/>
</dbReference>
<dbReference type="GO" id="GO:0019843">
    <property type="term" value="F:rRNA binding"/>
    <property type="evidence" value="ECO:0007669"/>
    <property type="project" value="UniProtKB-UniRule"/>
</dbReference>
<dbReference type="GO" id="GO:0003735">
    <property type="term" value="F:structural constituent of ribosome"/>
    <property type="evidence" value="ECO:0007669"/>
    <property type="project" value="InterPro"/>
</dbReference>
<dbReference type="GO" id="GO:0000027">
    <property type="term" value="P:ribosomal large subunit assembly"/>
    <property type="evidence" value="ECO:0007669"/>
    <property type="project" value="UniProtKB-UniRule"/>
</dbReference>
<dbReference type="GO" id="GO:0006412">
    <property type="term" value="P:translation"/>
    <property type="evidence" value="ECO:0007669"/>
    <property type="project" value="InterPro"/>
</dbReference>
<dbReference type="CDD" id="cd07026">
    <property type="entry name" value="Ribosomal_L20"/>
    <property type="match status" value="1"/>
</dbReference>
<dbReference type="FunFam" id="1.10.1900.20:FF:000001">
    <property type="entry name" value="50S ribosomal protein L20"/>
    <property type="match status" value="1"/>
</dbReference>
<dbReference type="Gene3D" id="6.10.160.10">
    <property type="match status" value="1"/>
</dbReference>
<dbReference type="Gene3D" id="1.10.1900.20">
    <property type="entry name" value="Ribosomal protein L20"/>
    <property type="match status" value="1"/>
</dbReference>
<dbReference type="HAMAP" id="MF_00382">
    <property type="entry name" value="Ribosomal_bL20"/>
    <property type="match status" value="1"/>
</dbReference>
<dbReference type="InterPro" id="IPR005813">
    <property type="entry name" value="Ribosomal_bL20"/>
</dbReference>
<dbReference type="InterPro" id="IPR049946">
    <property type="entry name" value="RIBOSOMAL_L20_CS"/>
</dbReference>
<dbReference type="InterPro" id="IPR035566">
    <property type="entry name" value="Ribosomal_protein_bL20_C"/>
</dbReference>
<dbReference type="NCBIfam" id="TIGR01032">
    <property type="entry name" value="rplT_bact"/>
    <property type="match status" value="1"/>
</dbReference>
<dbReference type="PANTHER" id="PTHR10986">
    <property type="entry name" value="39S RIBOSOMAL PROTEIN L20"/>
    <property type="match status" value="1"/>
</dbReference>
<dbReference type="Pfam" id="PF00453">
    <property type="entry name" value="Ribosomal_L20"/>
    <property type="match status" value="1"/>
</dbReference>
<dbReference type="PRINTS" id="PR00062">
    <property type="entry name" value="RIBOSOMALL20"/>
</dbReference>
<dbReference type="SUPFAM" id="SSF74731">
    <property type="entry name" value="Ribosomal protein L20"/>
    <property type="match status" value="1"/>
</dbReference>
<dbReference type="PROSITE" id="PS00937">
    <property type="entry name" value="RIBOSOMAL_L20"/>
    <property type="match status" value="1"/>
</dbReference>
<proteinExistence type="inferred from homology"/>
<accession>Q67QG5</accession>
<feature type="chain" id="PRO_0000177244" description="Large ribosomal subunit protein bL20">
    <location>
        <begin position="1"/>
        <end position="117"/>
    </location>
</feature>
<protein>
    <recommendedName>
        <fullName evidence="1">Large ribosomal subunit protein bL20</fullName>
    </recommendedName>
    <alternativeName>
        <fullName evidence="2">50S ribosomal protein L20</fullName>
    </alternativeName>
</protein>